<evidence type="ECO:0000250" key="1"/>
<evidence type="ECO:0000255" key="2"/>
<evidence type="ECO:0000256" key="3">
    <source>
        <dbReference type="SAM" id="MobiDB-lite"/>
    </source>
</evidence>
<evidence type="ECO:0000305" key="4"/>
<comment type="function">
    <text evidence="1">Performs an essential function in the repair of oxidatively damaged mtDNA that is required for the maintenance of the mitochondrial genome. Binds to DNA (By similarity).</text>
</comment>
<comment type="subcellular location">
    <subcellularLocation>
        <location evidence="1">Mitochondrion matrix</location>
        <location evidence="1">Mitochondrion nucleoid</location>
    </subcellularLocation>
</comment>
<comment type="similarity">
    <text evidence="4">Belongs to the MGM101 family.</text>
</comment>
<reference key="1">
    <citation type="journal article" date="2004" name="Nature">
        <title>Genome evolution in yeasts.</title>
        <authorList>
            <person name="Dujon B."/>
            <person name="Sherman D."/>
            <person name="Fischer G."/>
            <person name="Durrens P."/>
            <person name="Casaregola S."/>
            <person name="Lafontaine I."/>
            <person name="de Montigny J."/>
            <person name="Marck C."/>
            <person name="Neuveglise C."/>
            <person name="Talla E."/>
            <person name="Goffard N."/>
            <person name="Frangeul L."/>
            <person name="Aigle M."/>
            <person name="Anthouard V."/>
            <person name="Babour A."/>
            <person name="Barbe V."/>
            <person name="Barnay S."/>
            <person name="Blanchin S."/>
            <person name="Beckerich J.-M."/>
            <person name="Beyne E."/>
            <person name="Bleykasten C."/>
            <person name="Boisrame A."/>
            <person name="Boyer J."/>
            <person name="Cattolico L."/>
            <person name="Confanioleri F."/>
            <person name="de Daruvar A."/>
            <person name="Despons L."/>
            <person name="Fabre E."/>
            <person name="Fairhead C."/>
            <person name="Ferry-Dumazet H."/>
            <person name="Groppi A."/>
            <person name="Hantraye F."/>
            <person name="Hennequin C."/>
            <person name="Jauniaux N."/>
            <person name="Joyet P."/>
            <person name="Kachouri R."/>
            <person name="Kerrest A."/>
            <person name="Koszul R."/>
            <person name="Lemaire M."/>
            <person name="Lesur I."/>
            <person name="Ma L."/>
            <person name="Muller H."/>
            <person name="Nicaud J.-M."/>
            <person name="Nikolski M."/>
            <person name="Oztas S."/>
            <person name="Ozier-Kalogeropoulos O."/>
            <person name="Pellenz S."/>
            <person name="Potier S."/>
            <person name="Richard G.-F."/>
            <person name="Straub M.-L."/>
            <person name="Suleau A."/>
            <person name="Swennen D."/>
            <person name="Tekaia F."/>
            <person name="Wesolowski-Louvel M."/>
            <person name="Westhof E."/>
            <person name="Wirth B."/>
            <person name="Zeniou-Meyer M."/>
            <person name="Zivanovic Y."/>
            <person name="Bolotin-Fukuhara M."/>
            <person name="Thierry A."/>
            <person name="Bouchier C."/>
            <person name="Caudron B."/>
            <person name="Scarpelli C."/>
            <person name="Gaillardin C."/>
            <person name="Weissenbach J."/>
            <person name="Wincker P."/>
            <person name="Souciet J.-L."/>
        </authorList>
    </citation>
    <scope>NUCLEOTIDE SEQUENCE [LARGE SCALE GENOMIC DNA]</scope>
    <source>
        <strain>ATCC 36239 / CBS 767 / BCRC 21394 / JCM 1990 / NBRC 0083 / IGC 2968</strain>
    </source>
</reference>
<protein>
    <recommendedName>
        <fullName>Mitochondrial genome maintenance protein MGM101</fullName>
    </recommendedName>
</protein>
<name>MG101_DEBHA</name>
<accession>Q6BN05</accession>
<feature type="transit peptide" description="Mitochondrion" evidence="2">
    <location>
        <begin position="1"/>
        <end position="23"/>
    </location>
</feature>
<feature type="chain" id="PRO_0000045817" description="Mitochondrial genome maintenance protein MGM101">
    <location>
        <begin position="24"/>
        <end position="275"/>
    </location>
</feature>
<feature type="region of interest" description="Disordered" evidence="3">
    <location>
        <begin position="51"/>
        <end position="93"/>
    </location>
</feature>
<feature type="compositionally biased region" description="Polar residues" evidence="3">
    <location>
        <begin position="51"/>
        <end position="62"/>
    </location>
</feature>
<feature type="compositionally biased region" description="Low complexity" evidence="3">
    <location>
        <begin position="63"/>
        <end position="88"/>
    </location>
</feature>
<gene>
    <name type="primary">MGM101</name>
    <name type="ordered locus">DEHA2F01210g</name>
</gene>
<dbReference type="EMBL" id="CR382138">
    <property type="protein sequence ID" value="CAG88719.2"/>
    <property type="molecule type" value="Genomic_DNA"/>
</dbReference>
<dbReference type="RefSeq" id="XP_460415.2">
    <property type="nucleotide sequence ID" value="XM_460415.1"/>
</dbReference>
<dbReference type="FunCoup" id="Q6BN05">
    <property type="interactions" value="297"/>
</dbReference>
<dbReference type="STRING" id="284592.Q6BN05"/>
<dbReference type="GeneID" id="2903815"/>
<dbReference type="KEGG" id="dha:DEHA2F01210g"/>
<dbReference type="VEuPathDB" id="FungiDB:DEHA2F01210g"/>
<dbReference type="eggNOG" id="ENOG502RXU4">
    <property type="taxonomic scope" value="Eukaryota"/>
</dbReference>
<dbReference type="HOGENOM" id="CLU_028692_1_0_1"/>
<dbReference type="InParanoid" id="Q6BN05"/>
<dbReference type="OMA" id="INWETSW"/>
<dbReference type="OrthoDB" id="17164at2759"/>
<dbReference type="Proteomes" id="UP000000599">
    <property type="component" value="Chromosome F"/>
</dbReference>
<dbReference type="GO" id="GO:0000262">
    <property type="term" value="C:mitochondrial chromosome"/>
    <property type="evidence" value="ECO:0007669"/>
    <property type="project" value="InterPro"/>
</dbReference>
<dbReference type="GO" id="GO:0003697">
    <property type="term" value="F:single-stranded DNA binding"/>
    <property type="evidence" value="ECO:0007669"/>
    <property type="project" value="EnsemblFungi"/>
</dbReference>
<dbReference type="GO" id="GO:0036297">
    <property type="term" value="P:interstrand cross-link repair"/>
    <property type="evidence" value="ECO:0007669"/>
    <property type="project" value="EnsemblFungi"/>
</dbReference>
<dbReference type="GO" id="GO:0000002">
    <property type="term" value="P:mitochondrial genome maintenance"/>
    <property type="evidence" value="ECO:0007669"/>
    <property type="project" value="EnsemblFungi"/>
</dbReference>
<dbReference type="GO" id="GO:0000725">
    <property type="term" value="P:recombinational repair"/>
    <property type="evidence" value="ECO:0007669"/>
    <property type="project" value="EnsemblFungi"/>
</dbReference>
<dbReference type="InterPro" id="IPR009446">
    <property type="entry name" value="Mgm101"/>
</dbReference>
<dbReference type="PANTHER" id="PTHR31404">
    <property type="entry name" value="MITOCHONDRIAL GENOME MAINTENANCE PROTEIN MGM101"/>
    <property type="match status" value="1"/>
</dbReference>
<dbReference type="PANTHER" id="PTHR31404:SF0">
    <property type="entry name" value="MITOCHONDRIAL GENOME MAINTENANCE PROTEIN MGM101"/>
    <property type="match status" value="1"/>
</dbReference>
<dbReference type="Pfam" id="PF06420">
    <property type="entry name" value="Mgm101p"/>
    <property type="match status" value="1"/>
</dbReference>
<sequence length="275" mass="30627">MIRGTSLSTSSRSIKVFIFNARYSSNYVKAPIKKMSYNSAFQKSYYSNPASKNGMTNNSATTSSPKPISNNESESSSSSSTIKSFSDSPAIASSPEVGSPINWSDSFHGLGTAPFPKEVSDILLASIDNDDIEIKPDGLLYLPEIKYRRILNRAFGPGGWGLAPRTESLITPKQISREYALICHGRLVSVARGEQDYFGGDEKITTALEGCKSNALMRCCKDLGIASELWDPSFIRKWKKDFCDEIFAEHVTTKKKKKLWKLKKNKTLDYPYKKI</sequence>
<keyword id="KW-0227">DNA damage</keyword>
<keyword id="KW-0234">DNA repair</keyword>
<keyword id="KW-0238">DNA-binding</keyword>
<keyword id="KW-0496">Mitochondrion</keyword>
<keyword id="KW-1135">Mitochondrion nucleoid</keyword>
<keyword id="KW-1185">Reference proteome</keyword>
<keyword id="KW-0809">Transit peptide</keyword>
<proteinExistence type="inferred from homology"/>
<organism>
    <name type="scientific">Debaryomyces hansenii (strain ATCC 36239 / CBS 767 / BCRC 21394 / JCM 1990 / NBRC 0083 / IGC 2968)</name>
    <name type="common">Yeast</name>
    <name type="synonym">Torulaspora hansenii</name>
    <dbReference type="NCBI Taxonomy" id="284592"/>
    <lineage>
        <taxon>Eukaryota</taxon>
        <taxon>Fungi</taxon>
        <taxon>Dikarya</taxon>
        <taxon>Ascomycota</taxon>
        <taxon>Saccharomycotina</taxon>
        <taxon>Pichiomycetes</taxon>
        <taxon>Debaryomycetaceae</taxon>
        <taxon>Debaryomyces</taxon>
    </lineage>
</organism>